<sequence length="150" mass="17868">MNTLKMQRRIAAEILKCGENRIWIDPERIDDVASAITREDIKRLIKEGVIKKKPIKGQSRYRAKIRHEQKKKGRHRGPGSRKGKKTARMGKKELWIKTIRALRKELRKLKAQKKIDRKTYRMLYIRAKGGQFKNKHQLYLFLEEHGLLKK</sequence>
<reference key="1">
    <citation type="journal article" date="2000" name="FEBS Lett.">
        <title>5S rRNA binding proteins from the hyperthermophilic archaeon, Pyrococcus furiosus.</title>
        <authorList>
            <person name="Furumoto H."/>
            <person name="Taguchi A."/>
            <person name="Itoh T."/>
            <person name="Morinaga T."/>
            <person name="Itoh T."/>
        </authorList>
    </citation>
    <scope>NUCLEOTIDE SEQUENCE [GENOMIC DNA]</scope>
    <source>
        <strain>ATCC 43587 / DSM 3638 / JCM 8422 / Vc1</strain>
    </source>
</reference>
<reference key="2">
    <citation type="journal article" date="1999" name="Genetics">
        <title>Divergence of the hyperthermophilic archaea Pyrococcus furiosus and P. horikoshii inferred from complete genomic sequences.</title>
        <authorList>
            <person name="Maeder D.L."/>
            <person name="Weiss R.B."/>
            <person name="Dunn D.M."/>
            <person name="Cherry J.L."/>
            <person name="Gonzalez J.M."/>
            <person name="DiRuggiero J."/>
            <person name="Robb F.T."/>
        </authorList>
    </citation>
    <scope>NUCLEOTIDE SEQUENCE [LARGE SCALE GENOMIC DNA]</scope>
    <source>
        <strain>ATCC 43587 / DSM 3638 / JCM 8422 / Vc1</strain>
    </source>
</reference>
<reference evidence="5" key="3">
    <citation type="journal article" date="2013" name="Nucleic Acids Res.">
        <title>Promiscuous behaviour of archaeal ribosomal proteins: implications for eukaryotic ribosome evolution.</title>
        <authorList>
            <person name="Armache J.P."/>
            <person name="Anger A.M."/>
            <person name="Marquez V."/>
            <person name="Franckenberg S."/>
            <person name="Frohlich T."/>
            <person name="Villa E."/>
            <person name="Berninghausen O."/>
            <person name="Thomm M."/>
            <person name="Arnold G.J."/>
            <person name="Beckmann R."/>
            <person name="Wilson D.N."/>
        </authorList>
    </citation>
    <scope>STRUCTURE BY ELECTRON MICROSCOPY (6.60 ANGSTROMS) IN THE 70S RIBOSOME</scope>
    <scope>SUBUNIT</scope>
</reference>
<accession>Q8U016</accession>
<accession>Q9HH81</accession>
<name>RL19E_PYRFU</name>
<feature type="chain" id="PRO_0000131193" description="Large ribosomal subunit protein eL19">
    <location>
        <begin position="1"/>
        <end position="150"/>
    </location>
</feature>
<feature type="region of interest" description="Disordered" evidence="2">
    <location>
        <begin position="55"/>
        <end position="89"/>
    </location>
</feature>
<feature type="sequence conflict" description="In Ref. 1; BAB13702." evidence="4" ref="1">
    <original>T</original>
    <variation>P</variation>
    <location>
        <position position="37"/>
    </location>
</feature>
<protein>
    <recommendedName>
        <fullName evidence="1">Large ribosomal subunit protein eL19</fullName>
    </recommendedName>
    <alternativeName>
        <fullName>50S ribosomal protein L19e</fullName>
    </alternativeName>
    <alternativeName>
        <fullName>PfeL19</fullName>
    </alternativeName>
</protein>
<keyword id="KW-0002">3D-structure</keyword>
<keyword id="KW-1185">Reference proteome</keyword>
<keyword id="KW-0687">Ribonucleoprotein</keyword>
<keyword id="KW-0689">Ribosomal protein</keyword>
<keyword id="KW-0694">RNA-binding</keyword>
<keyword id="KW-0699">rRNA-binding</keyword>
<comment type="function">
    <text evidence="1">Binds to the 23S rRNA.</text>
</comment>
<comment type="subunit">
    <text evidence="1 3">Part of the 50S ribosomal subunit.</text>
</comment>
<comment type="similarity">
    <text evidence="1">Belongs to the eukaryotic ribosomal protein eL19 family.</text>
</comment>
<organism>
    <name type="scientific">Pyrococcus furiosus (strain ATCC 43587 / DSM 3638 / JCM 8422 / Vc1)</name>
    <dbReference type="NCBI Taxonomy" id="186497"/>
    <lineage>
        <taxon>Archaea</taxon>
        <taxon>Methanobacteriati</taxon>
        <taxon>Methanobacteriota</taxon>
        <taxon>Thermococci</taxon>
        <taxon>Thermococcales</taxon>
        <taxon>Thermococcaceae</taxon>
        <taxon>Pyrococcus</taxon>
    </lineage>
</organism>
<proteinExistence type="evidence at protein level"/>
<gene>
    <name evidence="1" type="primary">rpl19e</name>
    <name type="ordered locus">PF1806</name>
</gene>
<evidence type="ECO:0000255" key="1">
    <source>
        <dbReference type="HAMAP-Rule" id="MF_01475"/>
    </source>
</evidence>
<evidence type="ECO:0000256" key="2">
    <source>
        <dbReference type="SAM" id="MobiDB-lite"/>
    </source>
</evidence>
<evidence type="ECO:0000269" key="3">
    <source>
    </source>
</evidence>
<evidence type="ECO:0000305" key="4"/>
<evidence type="ECO:0007744" key="5">
    <source>
        <dbReference type="PDB" id="4V6U"/>
    </source>
</evidence>
<dbReference type="EMBL" id="AB040118">
    <property type="protein sequence ID" value="BAB13702.1"/>
    <property type="molecule type" value="Genomic_DNA"/>
</dbReference>
<dbReference type="EMBL" id="AE009950">
    <property type="protein sequence ID" value="AAL81930.1"/>
    <property type="molecule type" value="Genomic_DNA"/>
</dbReference>
<dbReference type="RefSeq" id="WP_011012947.1">
    <property type="nucleotide sequence ID" value="NZ_CP023154.1"/>
</dbReference>
<dbReference type="PDB" id="4V4N">
    <property type="method" value="EM"/>
    <property type="resolution" value="9.00 A"/>
    <property type="chains" value="Q=1-150"/>
</dbReference>
<dbReference type="PDB" id="4V6U">
    <property type="method" value="EM"/>
    <property type="resolution" value="6.60 A"/>
    <property type="chains" value="BQ=1-150"/>
</dbReference>
<dbReference type="PDBsum" id="4V4N"/>
<dbReference type="PDBsum" id="4V6U"/>
<dbReference type="SMR" id="Q8U016"/>
<dbReference type="STRING" id="186497.PF1806"/>
<dbReference type="PaxDb" id="186497-PF1806"/>
<dbReference type="KEGG" id="pfu:PF1806"/>
<dbReference type="PATRIC" id="fig|186497.12.peg.1877"/>
<dbReference type="eggNOG" id="arCOG04089">
    <property type="taxonomic scope" value="Archaea"/>
</dbReference>
<dbReference type="HOGENOM" id="CLU_083919_1_1_2"/>
<dbReference type="OrthoDB" id="11624at2157"/>
<dbReference type="PhylomeDB" id="Q8U016"/>
<dbReference type="Proteomes" id="UP000001013">
    <property type="component" value="Chromosome"/>
</dbReference>
<dbReference type="GO" id="GO:0022625">
    <property type="term" value="C:cytosolic large ribosomal subunit"/>
    <property type="evidence" value="ECO:0007669"/>
    <property type="project" value="InterPro"/>
</dbReference>
<dbReference type="GO" id="GO:0070180">
    <property type="term" value="F:large ribosomal subunit rRNA binding"/>
    <property type="evidence" value="ECO:0007669"/>
    <property type="project" value="UniProtKB-UniRule"/>
</dbReference>
<dbReference type="GO" id="GO:0003735">
    <property type="term" value="F:structural constituent of ribosome"/>
    <property type="evidence" value="ECO:0007669"/>
    <property type="project" value="InterPro"/>
</dbReference>
<dbReference type="GO" id="GO:0006412">
    <property type="term" value="P:translation"/>
    <property type="evidence" value="ECO:0007669"/>
    <property type="project" value="UniProtKB-UniRule"/>
</dbReference>
<dbReference type="CDD" id="cd01418">
    <property type="entry name" value="Ribosomal_L19e_A"/>
    <property type="match status" value="1"/>
</dbReference>
<dbReference type="FunFam" id="1.10.1200.240:FF:000003">
    <property type="entry name" value="50S ribosomal protein L19e"/>
    <property type="match status" value="1"/>
</dbReference>
<dbReference type="FunFam" id="1.10.1650.10:FF:000001">
    <property type="entry name" value="Ribosomal protein L19"/>
    <property type="match status" value="1"/>
</dbReference>
<dbReference type="Gene3D" id="1.10.1200.240">
    <property type="match status" value="1"/>
</dbReference>
<dbReference type="Gene3D" id="1.10.1650.10">
    <property type="match status" value="1"/>
</dbReference>
<dbReference type="HAMAP" id="MF_01475">
    <property type="entry name" value="Ribosomal_eL19"/>
    <property type="match status" value="1"/>
</dbReference>
<dbReference type="InterPro" id="IPR035970">
    <property type="entry name" value="60S_ribosomal_eL19_sf"/>
</dbReference>
<dbReference type="InterPro" id="IPR039547">
    <property type="entry name" value="Ribosomal_eL19"/>
</dbReference>
<dbReference type="InterPro" id="IPR033936">
    <property type="entry name" value="Ribosomal_eL19_arc"/>
</dbReference>
<dbReference type="InterPro" id="IPR023638">
    <property type="entry name" value="Ribosomal_eL19_CS"/>
</dbReference>
<dbReference type="InterPro" id="IPR000196">
    <property type="entry name" value="Ribosomal_eL19_dom"/>
</dbReference>
<dbReference type="InterPro" id="IPR015972">
    <property type="entry name" value="Ribosomal_eL19_dom1"/>
</dbReference>
<dbReference type="NCBIfam" id="NF006343">
    <property type="entry name" value="PRK08570.1"/>
    <property type="match status" value="1"/>
</dbReference>
<dbReference type="PANTHER" id="PTHR10722">
    <property type="entry name" value="60S RIBOSOMAL PROTEIN L19"/>
    <property type="match status" value="1"/>
</dbReference>
<dbReference type="Pfam" id="PF01280">
    <property type="entry name" value="Ribosomal_L19e"/>
    <property type="match status" value="1"/>
</dbReference>
<dbReference type="Pfam" id="PF25476">
    <property type="entry name" value="Ribosomal_L19e_C"/>
    <property type="match status" value="1"/>
</dbReference>
<dbReference type="SMART" id="SM01416">
    <property type="entry name" value="Ribosomal_L19e"/>
    <property type="match status" value="1"/>
</dbReference>
<dbReference type="SUPFAM" id="SSF48140">
    <property type="entry name" value="Ribosomal protein L19 (L19e)"/>
    <property type="match status" value="1"/>
</dbReference>
<dbReference type="PROSITE" id="PS00526">
    <property type="entry name" value="RIBOSOMAL_L19E"/>
    <property type="match status" value="1"/>
</dbReference>